<sequence length="174" mass="19948">MQTQKGGRPTILPKMYEEPLFSQIIDKIESGCNDREIYTSLHCSAKTFRKWRDDNIKAYDEAKSIARGNLLELAESALASKLTVRTLKETETIYDADGNVEKVKVKEKELDKDSLVAMMVAKAGNPELYNPTEWRRLQQEESSAHDLKAKIEELDDYKLSKYKTPEIEVPEGFE</sequence>
<keyword id="KW-0231">Viral genome packaging</keyword>
<keyword id="KW-1188">Viral release from host cell</keyword>
<evidence type="ECO:0000303" key="1">
    <source>
    </source>
</evidence>
<evidence type="ECO:0000305" key="2"/>
<evidence type="ECO:0000305" key="3">
    <source>
    </source>
</evidence>
<accession>D3WAC0</accession>
<name>TERS_BPLP2</name>
<proteinExistence type="inferred from homology"/>
<organism>
    <name type="scientific">Lactococcus phage p2</name>
    <name type="common">Lactococcus lactis bacteriophage p2</name>
    <dbReference type="NCBI Taxonomy" id="254252"/>
    <lineage>
        <taxon>Viruses</taxon>
        <taxon>Duplodnaviria</taxon>
        <taxon>Heunggongvirae</taxon>
        <taxon>Uroviricota</taxon>
        <taxon>Caudoviricetes</taxon>
        <taxon>Skunavirus</taxon>
    </lineage>
</organism>
<organismHost>
    <name type="scientific">Lactococcus lactis</name>
    <dbReference type="NCBI Taxonomy" id="1358"/>
</organismHost>
<reference key="1">
    <citation type="submission" date="2010-02" db="EMBL/GenBank/DDBJ databases">
        <title>Complete genomic sequence of Lactococcus lactis phage p2.</title>
        <authorList>
            <person name="Tremblay D.M."/>
            <person name="Deveau H."/>
            <person name="Moineau S."/>
        </authorList>
    </citation>
    <scope>NUCLEOTIDE SEQUENCE [LARGE SCALE GENOMIC DNA]</scope>
</reference>
<reference key="2">
    <citation type="journal article" date="2013" name="J. Virol.">
        <title>Structure, adsorption to host, and infection mechanism of virulent lactococcal phage p2.</title>
        <authorList>
            <person name="Bebeacua C."/>
            <person name="Tremblay D."/>
            <person name="Farenc C."/>
            <person name="Chapot-Chartier M.P."/>
            <person name="Sadovskaya I."/>
            <person name="van Heel M."/>
            <person name="Veesler D."/>
            <person name="Moineau S."/>
            <person name="Cambillau C."/>
        </authorList>
    </citation>
    <scope>FUNCTION</scope>
</reference>
<feature type="chain" id="PRO_0000438228" description="Terminase small subunit">
    <location>
        <begin position="1"/>
        <end position="174"/>
    </location>
</feature>
<comment type="function">
    <text evidence="3">Probable terminase small subunit. The terminase lies at a unique vertex of the procapsid and is composed of two subunits, a small terminase subunit and a large terminase subunit. Both terminase subunits heterooligomerize and are docked on the portal protein to form the packaging machine. Once the capsid is packaged with the DNA, the terminase complex is substituted by the connector proteins gp15.</text>
</comment>
<comment type="similarity">
    <text evidence="2">Belongs to the skunalikevirus terminase small subunit family.</text>
</comment>
<protein>
    <recommendedName>
        <fullName evidence="1">Terminase small subunit</fullName>
    </recommendedName>
    <alternativeName>
        <fullName evidence="2">Gene product 1</fullName>
        <shortName evidence="2">gp1</shortName>
    </alternativeName>
</protein>
<dbReference type="EMBL" id="GQ979703">
    <property type="protein sequence ID" value="ADC80077.1"/>
    <property type="molecule type" value="Genomic_DNA"/>
</dbReference>
<dbReference type="RefSeq" id="YP_009613481.1">
    <property type="nucleotide sequence ID" value="NC_042024.1"/>
</dbReference>
<dbReference type="GeneID" id="40089905"/>
<dbReference type="Proteomes" id="UP000002348">
    <property type="component" value="Segment"/>
</dbReference>
<dbReference type="InterPro" id="IPR010789">
    <property type="entry name" value="Terminase_ssu_Skunalikevirus"/>
</dbReference>
<dbReference type="Pfam" id="PF07141">
    <property type="entry name" value="Phage_term_sma"/>
    <property type="match status" value="1"/>
</dbReference>